<accession>A0A0P0ZEM1</accession>
<name>STLSS_EMEVA</name>
<feature type="chain" id="PRO_0000452514" description="Stellatatriene synthase">
    <location>
        <begin position="1"/>
        <end position="714"/>
    </location>
</feature>
<feature type="region of interest" description="stellata-2,6,19-trien synthase" evidence="1">
    <location>
        <begin position="1"/>
        <end position="325"/>
    </location>
</feature>
<feature type="region of interest" description="Geranylgeranyl diphosphate synthase" evidence="1">
    <location>
        <begin position="326"/>
        <end position="713"/>
    </location>
</feature>
<feature type="region of interest" description="Disordered" evidence="4">
    <location>
        <begin position="332"/>
        <end position="356"/>
    </location>
</feature>
<feature type="short sequence motif" description="DDXXD motif 1" evidence="8">
    <location>
        <begin position="92"/>
        <end position="96"/>
    </location>
</feature>
<feature type="short sequence motif" description="NSE motif" evidence="8">
    <location>
        <begin position="276"/>
        <end position="284"/>
    </location>
</feature>
<feature type="short sequence motif" description="DDXXD motif 2" evidence="8">
    <location>
        <begin position="473"/>
        <end position="477"/>
    </location>
</feature>
<feature type="compositionally biased region" description="Low complexity" evidence="4">
    <location>
        <begin position="341"/>
        <end position="356"/>
    </location>
</feature>
<feature type="binding site" evidence="3">
    <location>
        <position position="92"/>
    </location>
    <ligand>
        <name>Mg(2+)</name>
        <dbReference type="ChEBI" id="CHEBI:18420"/>
        <label>1</label>
    </ligand>
</feature>
<feature type="binding site" evidence="3">
    <location>
        <position position="92"/>
    </location>
    <ligand>
        <name>Mg(2+)</name>
        <dbReference type="ChEBI" id="CHEBI:18420"/>
        <label>2</label>
    </ligand>
</feature>
<feature type="binding site" evidence="3">
    <location>
        <position position="96"/>
    </location>
    <ligand>
        <name>Mg(2+)</name>
        <dbReference type="ChEBI" id="CHEBI:18420"/>
        <label>1</label>
    </ligand>
</feature>
<feature type="binding site" evidence="3">
    <location>
        <position position="96"/>
    </location>
    <ligand>
        <name>Mg(2+)</name>
        <dbReference type="ChEBI" id="CHEBI:18420"/>
        <label>2</label>
    </ligand>
</feature>
<feature type="binding site" evidence="2">
    <location>
        <position position="434"/>
    </location>
    <ligand>
        <name>isopentenyl diphosphate</name>
        <dbReference type="ChEBI" id="CHEBI:128769"/>
    </ligand>
</feature>
<feature type="binding site" evidence="2">
    <location>
        <position position="437"/>
    </location>
    <ligand>
        <name>isopentenyl diphosphate</name>
        <dbReference type="ChEBI" id="CHEBI:128769"/>
    </ligand>
</feature>
<feature type="binding site" evidence="2">
    <location>
        <position position="466"/>
    </location>
    <ligand>
        <name>isopentenyl diphosphate</name>
        <dbReference type="ChEBI" id="CHEBI:128769"/>
    </ligand>
</feature>
<feature type="binding site" evidence="2">
    <location>
        <position position="473"/>
    </location>
    <ligand>
        <name>Mg(2+)</name>
        <dbReference type="ChEBI" id="CHEBI:18420"/>
        <label>3</label>
    </ligand>
</feature>
<feature type="binding site" evidence="2">
    <location>
        <position position="473"/>
    </location>
    <ligand>
        <name>Mg(2+)</name>
        <dbReference type="ChEBI" id="CHEBI:18420"/>
        <label>4</label>
    </ligand>
</feature>
<feature type="binding site" evidence="2">
    <location>
        <position position="477"/>
    </location>
    <ligand>
        <name>Mg(2+)</name>
        <dbReference type="ChEBI" id="CHEBI:18420"/>
        <label>3</label>
    </ligand>
</feature>
<feature type="binding site" evidence="2">
    <location>
        <position position="477"/>
    </location>
    <ligand>
        <name>Mg(2+)</name>
        <dbReference type="ChEBI" id="CHEBI:18420"/>
        <label>4</label>
    </ligand>
</feature>
<feature type="binding site" evidence="2">
    <location>
        <position position="482"/>
    </location>
    <ligand>
        <name>dimethylallyl diphosphate</name>
        <dbReference type="ChEBI" id="CHEBI:57623"/>
    </ligand>
</feature>
<feature type="binding site" evidence="2">
    <location>
        <position position="483"/>
    </location>
    <ligand>
        <name>isopentenyl diphosphate</name>
        <dbReference type="ChEBI" id="CHEBI:128769"/>
    </ligand>
</feature>
<feature type="binding site" evidence="2">
    <location>
        <position position="560"/>
    </location>
    <ligand>
        <name>dimethylallyl diphosphate</name>
        <dbReference type="ChEBI" id="CHEBI:57623"/>
    </ligand>
</feature>
<feature type="binding site" evidence="2">
    <location>
        <position position="561"/>
    </location>
    <ligand>
        <name>dimethylallyl diphosphate</name>
        <dbReference type="ChEBI" id="CHEBI:57623"/>
    </ligand>
</feature>
<feature type="binding site" evidence="2">
    <location>
        <position position="596"/>
    </location>
    <ligand>
        <name>dimethylallyl diphosphate</name>
        <dbReference type="ChEBI" id="CHEBI:57623"/>
    </ligand>
</feature>
<feature type="binding site" evidence="2">
    <location>
        <position position="603"/>
    </location>
    <ligand>
        <name>dimethylallyl diphosphate</name>
        <dbReference type="ChEBI" id="CHEBI:57623"/>
    </ligand>
</feature>
<feature type="binding site" evidence="2">
    <location>
        <position position="613"/>
    </location>
    <ligand>
        <name>dimethylallyl diphosphate</name>
        <dbReference type="ChEBI" id="CHEBI:57623"/>
    </ligand>
</feature>
<feature type="binding site" evidence="2">
    <location>
        <position position="623"/>
    </location>
    <ligand>
        <name>dimethylallyl diphosphate</name>
        <dbReference type="ChEBI" id="CHEBI:57623"/>
    </ligand>
</feature>
<protein>
    <recommendedName>
        <fullName evidence="6">Stellatatriene synthase</fullName>
        <shortName evidence="6">SS</shortName>
    </recommendedName>
    <alternativeName>
        <fullName evidence="6">Stellatic acid biosynthetis gene clusters protein Stl-SS</fullName>
    </alternativeName>
    <domain>
        <recommendedName>
            <fullName evidence="6">Geranylgeranyl diphosphate synthase</fullName>
            <shortName evidence="6">GGDP synthase</shortName>
            <shortName evidence="6">GGS</shortName>
            <ecNumber evidence="5">2.5.1.-</ecNumber>
        </recommendedName>
    </domain>
    <domain>
        <recommendedName>
            <fullName evidence="6">stellata-2,6,19-trien synthase</fullName>
            <ecNumber evidence="5">4.2.3.178</ecNumber>
        </recommendedName>
    </domain>
</protein>
<dbReference type="EC" id="2.5.1.-" evidence="5"/>
<dbReference type="EC" id="4.2.3.178" evidence="5"/>
<dbReference type="EMBL" id="LC073704">
    <property type="protein sequence ID" value="BAT32889.1"/>
    <property type="molecule type" value="Genomic_DNA"/>
</dbReference>
<dbReference type="SMR" id="A0A0P0ZEM1"/>
<dbReference type="KEGG" id="ag:BAT32889"/>
<dbReference type="UniPathway" id="UPA00213"/>
<dbReference type="GO" id="GO:0016829">
    <property type="term" value="F:lyase activity"/>
    <property type="evidence" value="ECO:0007669"/>
    <property type="project" value="UniProtKB-KW"/>
</dbReference>
<dbReference type="GO" id="GO:0046872">
    <property type="term" value="F:metal ion binding"/>
    <property type="evidence" value="ECO:0007669"/>
    <property type="project" value="UniProtKB-KW"/>
</dbReference>
<dbReference type="GO" id="GO:0004659">
    <property type="term" value="F:prenyltransferase activity"/>
    <property type="evidence" value="ECO:0007669"/>
    <property type="project" value="InterPro"/>
</dbReference>
<dbReference type="GO" id="GO:0046165">
    <property type="term" value="P:alcohol biosynthetic process"/>
    <property type="evidence" value="ECO:0007669"/>
    <property type="project" value="UniProtKB-ARBA"/>
</dbReference>
<dbReference type="GO" id="GO:0043386">
    <property type="term" value="P:mycotoxin biosynthetic process"/>
    <property type="evidence" value="ECO:0007669"/>
    <property type="project" value="UniProtKB-ARBA"/>
</dbReference>
<dbReference type="GO" id="GO:0016114">
    <property type="term" value="P:terpenoid biosynthetic process"/>
    <property type="evidence" value="ECO:0007669"/>
    <property type="project" value="UniProtKB-UniPathway"/>
</dbReference>
<dbReference type="CDD" id="cd00685">
    <property type="entry name" value="Trans_IPPS_HT"/>
    <property type="match status" value="1"/>
</dbReference>
<dbReference type="Gene3D" id="1.10.600.10">
    <property type="entry name" value="Farnesyl Diphosphate Synthase"/>
    <property type="match status" value="2"/>
</dbReference>
<dbReference type="InterPro" id="IPR008949">
    <property type="entry name" value="Isoprenoid_synthase_dom_sf"/>
</dbReference>
<dbReference type="InterPro" id="IPR000092">
    <property type="entry name" value="Polyprenyl_synt"/>
</dbReference>
<dbReference type="InterPro" id="IPR033749">
    <property type="entry name" value="Polyprenyl_synt_CS"/>
</dbReference>
<dbReference type="PANTHER" id="PTHR12001">
    <property type="entry name" value="GERANYLGERANYL PYROPHOSPHATE SYNTHASE"/>
    <property type="match status" value="1"/>
</dbReference>
<dbReference type="PANTHER" id="PTHR12001:SF72">
    <property type="entry name" value="THIJ_PFPI FAMILY PROTEIN (AFU_ORTHOLOGUE AFUA_3G01210)-RELATED"/>
    <property type="match status" value="1"/>
</dbReference>
<dbReference type="Pfam" id="PF00348">
    <property type="entry name" value="polyprenyl_synt"/>
    <property type="match status" value="1"/>
</dbReference>
<dbReference type="Pfam" id="PF19086">
    <property type="entry name" value="Terpene_syn_C_2"/>
    <property type="match status" value="1"/>
</dbReference>
<dbReference type="SFLD" id="SFLDS00005">
    <property type="entry name" value="Isoprenoid_Synthase_Type_I"/>
    <property type="match status" value="1"/>
</dbReference>
<dbReference type="SUPFAM" id="SSF48576">
    <property type="entry name" value="Terpenoid synthases"/>
    <property type="match status" value="2"/>
</dbReference>
<dbReference type="PROSITE" id="PS00723">
    <property type="entry name" value="POLYPRENYL_SYNTHASE_1"/>
    <property type="match status" value="1"/>
</dbReference>
<gene>
    <name evidence="6" type="primary">Stl-SS</name>
</gene>
<evidence type="ECO:0000250" key="1">
    <source>
        <dbReference type="UniProtKB" id="A2PZA5"/>
    </source>
</evidence>
<evidence type="ECO:0000250" key="2">
    <source>
        <dbReference type="UniProtKB" id="Q12051"/>
    </source>
</evidence>
<evidence type="ECO:0000250" key="3">
    <source>
        <dbReference type="UniProtKB" id="Q40577"/>
    </source>
</evidence>
<evidence type="ECO:0000256" key="4">
    <source>
        <dbReference type="SAM" id="MobiDB-lite"/>
    </source>
</evidence>
<evidence type="ECO:0000269" key="5">
    <source>
    </source>
</evidence>
<evidence type="ECO:0000303" key="6">
    <source>
    </source>
</evidence>
<evidence type="ECO:0000305" key="7"/>
<evidence type="ECO:0000305" key="8">
    <source>
    </source>
</evidence>
<comment type="function">
    <text evidence="5">Multifunctional diterpene synthase; part of the gene cluster that mediates the biosynthesis of the sesterterpene stellatic acid (PubMed:26351860). The first step in the pathway is performed by the stellatatriene synthase that possesses both prenyl transferase and terpene cyclase activity, converting isopentenyl diphosphate and dimethylallyl diphosphate into geranylgeranyl diphosphate (GGDP) and then converting GGDP into stellata-2,6,19-triene (PubMed:26351860). The cytochrome P450 monooxygenase Stl-P450 then catalyzes three successive oxidation reactions on the C-20 methyl group to generate the carboxylic acid of stellatic acid (PubMed:26351860).</text>
</comment>
<comment type="catalytic activity">
    <reaction evidence="5">
        <text>4 isopentenyl diphosphate + dimethylallyl diphosphate = (2E,6E,10E,14E)-geranylfarnesyl diphosphate + 4 diphosphate</text>
        <dbReference type="Rhea" id="RHEA:66860"/>
        <dbReference type="ChEBI" id="CHEBI:33019"/>
        <dbReference type="ChEBI" id="CHEBI:57623"/>
        <dbReference type="ChEBI" id="CHEBI:57907"/>
        <dbReference type="ChEBI" id="CHEBI:128769"/>
    </reaction>
    <physiologicalReaction direction="left-to-right" evidence="5">
        <dbReference type="Rhea" id="RHEA:66861"/>
    </physiologicalReaction>
</comment>
<comment type="catalytic activity">
    <reaction evidence="5">
        <text>(2E,6E,10E,14E)-geranylfarnesyl diphosphate = stellata-2,6,19-triene + diphosphate</text>
        <dbReference type="Rhea" id="RHEA:54076"/>
        <dbReference type="ChEBI" id="CHEBI:33019"/>
        <dbReference type="ChEBI" id="CHEBI:57907"/>
        <dbReference type="ChEBI" id="CHEBI:138048"/>
        <dbReference type="EC" id="4.2.3.178"/>
    </reaction>
    <physiologicalReaction direction="left-to-right" evidence="5">
        <dbReference type="Rhea" id="RHEA:54077"/>
    </physiologicalReaction>
</comment>
<comment type="pathway">
    <text evidence="5">Secondary metabolite biosynthesis; terpenoid biosynthesis.</text>
</comment>
<comment type="subunit">
    <text evidence="1">Hexamer.</text>
</comment>
<comment type="domain">
    <text evidence="8">The characteristic DDXXD motif for binding a trinuclear Mg(2+) cluster is conserved in both the N-terminal terpene cyclase and C-terminal prenyl transferase domains.</text>
</comment>
<comment type="domain">
    <text evidence="8">The Mg(2+)-binding NSE motif in the terpene cyclase domain is not completely conserved, since the asparagine residue in the is substituted with histidine.</text>
</comment>
<comment type="similarity">
    <text evidence="7">In the N-terminal section; belongs to the terpene synthase family.</text>
</comment>
<comment type="similarity">
    <text evidence="7">In the C-terminal section; belongs to the FPP/GGPP synthase family.</text>
</comment>
<reference key="1">
    <citation type="journal article" date="2015" name="Org. Lett.">
        <title>Molecular basis for stellatic acid biosynthesis: a genome mining approach for discovery of sesterterpene synthases.</title>
        <authorList>
            <person name="Matsuda Y."/>
            <person name="Mitsuhashi T."/>
            <person name="Quan Z."/>
            <person name="Abe I."/>
        </authorList>
    </citation>
    <scope>NUCLEOTIDE SEQUENCE [GENOMIC DNA]</scope>
    <scope>DOMAIN</scope>
    <scope>FUNCTION</scope>
    <scope>CATALYTIC ACTIVITY</scope>
    <scope>PATHWAY</scope>
    <source>
        <strain>ATCC 12069 / CBS 136.55 / IMI 60316 / NBRC 32302</strain>
    </source>
</reference>
<sequence>MEYKFSTVVDPGTYETHGLCEGYEVRYHKNAELEDIGCLRCQEHWRQSVGPLGAFKGTLGNPFNLLSLVIPECLPDRLSIVGFANELAFIHDDVTDIVQYGDAHNNDFKEAFNSMATTGSMENAASGKRALQAYIAREMVRIDKERAIPTIKAWAKFVDYGGRQETTRFTSEKEYTEYRIQDIGLWFWYGLLSFAMALDVPEHEREMCHEVCRTAYVQIMLVHDLASWEKEKLNAAALGKDVITNIIFVLMEEHGISEEEAKERCRETAKTLAADYLKIVEEYKARDDISLDSRKYIESWLYTISGNTVWSFICPRYNSSGSFSDHQLELMKNGVPKDPASGSTNGTSNGTSNGTSHVAVNGNGHVTNDDLSANGIKTDGELLSAITMEHLKNRNSFKLGDHDQEVKSLHGHGQALDPRVLQAPYEYITALPSKGLREQAIDALNVWFRVPTAKLEIIKSITTILHNASLMLDDVEDGSELRRGKPATHNIFGLGQTINSANYQLVRALQELQKLGDARSLLVFTEELHNLYVGQSMDLYWTSNLVCPSMHEYFQMIEHKTGGLFRLFGRLMAVHSTNPVQVDLTDFTNHLGRYFQTRDDYQNLVSAEYTKQKGFCEDFEEGKFSLPMIHLMQTMPDNLVLRNVWTQRRVNGTATHGQKQTILNLMKEAGTLKFTQDSLGVLYSDVEKSVAELESKFGIENFQLRLIMELLKTG</sequence>
<proteinExistence type="evidence at protein level"/>
<keyword id="KW-0414">Isoprene biosynthesis</keyword>
<keyword id="KW-0456">Lyase</keyword>
<keyword id="KW-0460">Magnesium</keyword>
<keyword id="KW-0479">Metal-binding</keyword>
<keyword id="KW-0511">Multifunctional enzyme</keyword>
<keyword id="KW-0677">Repeat</keyword>
<keyword id="KW-0808">Transferase</keyword>
<organism>
    <name type="scientific">Emericella variicolor</name>
    <name type="common">Aspergillus stellatus</name>
    <dbReference type="NCBI Taxonomy" id="1549217"/>
    <lineage>
        <taxon>Eukaryota</taxon>
        <taxon>Fungi</taxon>
        <taxon>Dikarya</taxon>
        <taxon>Ascomycota</taxon>
        <taxon>Pezizomycotina</taxon>
        <taxon>Eurotiomycetes</taxon>
        <taxon>Eurotiomycetidae</taxon>
        <taxon>Eurotiales</taxon>
        <taxon>Aspergillaceae</taxon>
        <taxon>Aspergillus</taxon>
        <taxon>Aspergillus subgen. Nidulantes</taxon>
    </lineage>
</organism>